<feature type="chain" id="PRO_1000069320" description="Carboxy-S-adenosyl-L-methionine synthase">
    <location>
        <begin position="1"/>
        <end position="247"/>
    </location>
</feature>
<feature type="binding site" evidence="1">
    <location>
        <position position="39"/>
    </location>
    <ligand>
        <name>S-adenosyl-L-methionine</name>
        <dbReference type="ChEBI" id="CHEBI:59789"/>
    </ligand>
</feature>
<feature type="binding site" evidence="1">
    <location>
        <begin position="64"/>
        <end position="66"/>
    </location>
    <ligand>
        <name>S-adenosyl-L-methionine</name>
        <dbReference type="ChEBI" id="CHEBI:59789"/>
    </ligand>
</feature>
<feature type="binding site" evidence="1">
    <location>
        <begin position="89"/>
        <end position="90"/>
    </location>
    <ligand>
        <name>S-adenosyl-L-methionine</name>
        <dbReference type="ChEBI" id="CHEBI:59789"/>
    </ligand>
</feature>
<feature type="binding site" evidence="1">
    <location>
        <begin position="117"/>
        <end position="118"/>
    </location>
    <ligand>
        <name>S-adenosyl-L-methionine</name>
        <dbReference type="ChEBI" id="CHEBI:59789"/>
    </ligand>
</feature>
<feature type="binding site" evidence="1">
    <location>
        <position position="132"/>
    </location>
    <ligand>
        <name>S-adenosyl-L-methionine</name>
        <dbReference type="ChEBI" id="CHEBI:59789"/>
    </ligand>
</feature>
<feature type="binding site" evidence="1">
    <location>
        <position position="199"/>
    </location>
    <ligand>
        <name>S-adenosyl-L-methionine</name>
        <dbReference type="ChEBI" id="CHEBI:59789"/>
    </ligand>
</feature>
<evidence type="ECO:0000255" key="1">
    <source>
        <dbReference type="HAMAP-Rule" id="MF_01589"/>
    </source>
</evidence>
<dbReference type="EC" id="2.1.3.-" evidence="1"/>
<dbReference type="EMBL" id="CP000800">
    <property type="protein sequence ID" value="ABV20133.1"/>
    <property type="molecule type" value="Genomic_DNA"/>
</dbReference>
<dbReference type="RefSeq" id="WP_000019588.1">
    <property type="nucleotide sequence ID" value="NC_009801.1"/>
</dbReference>
<dbReference type="SMR" id="A7ZMZ5"/>
<dbReference type="GeneID" id="75202724"/>
<dbReference type="KEGG" id="ecw:EcE24377A_2101"/>
<dbReference type="HOGENOM" id="CLU_078475_0_0_6"/>
<dbReference type="Proteomes" id="UP000001122">
    <property type="component" value="Chromosome"/>
</dbReference>
<dbReference type="GO" id="GO:0016743">
    <property type="term" value="F:carboxyl- or carbamoyltransferase activity"/>
    <property type="evidence" value="ECO:0007669"/>
    <property type="project" value="UniProtKB-UniRule"/>
</dbReference>
<dbReference type="GO" id="GO:1904047">
    <property type="term" value="F:S-adenosyl-L-methionine binding"/>
    <property type="evidence" value="ECO:0007669"/>
    <property type="project" value="UniProtKB-UniRule"/>
</dbReference>
<dbReference type="GO" id="GO:0002098">
    <property type="term" value="P:tRNA wobble uridine modification"/>
    <property type="evidence" value="ECO:0007669"/>
    <property type="project" value="InterPro"/>
</dbReference>
<dbReference type="CDD" id="cd02440">
    <property type="entry name" value="AdoMet_MTases"/>
    <property type="match status" value="1"/>
</dbReference>
<dbReference type="FunFam" id="3.40.50.150:FF:000030">
    <property type="entry name" value="Carboxy-S-adenosyl-L-methionine synthase"/>
    <property type="match status" value="1"/>
</dbReference>
<dbReference type="Gene3D" id="3.40.50.150">
    <property type="entry name" value="Vaccinia Virus protein VP39"/>
    <property type="match status" value="1"/>
</dbReference>
<dbReference type="HAMAP" id="MF_01589">
    <property type="entry name" value="Cx_SAM_synthase"/>
    <property type="match status" value="1"/>
</dbReference>
<dbReference type="InterPro" id="IPR005271">
    <property type="entry name" value="CmoA"/>
</dbReference>
<dbReference type="InterPro" id="IPR041698">
    <property type="entry name" value="Methyltransf_25"/>
</dbReference>
<dbReference type="InterPro" id="IPR029063">
    <property type="entry name" value="SAM-dependent_MTases_sf"/>
</dbReference>
<dbReference type="NCBIfam" id="TIGR00740">
    <property type="entry name" value="carboxy-S-adenosyl-L-methionine synthase CmoA"/>
    <property type="match status" value="1"/>
</dbReference>
<dbReference type="NCBIfam" id="NF011995">
    <property type="entry name" value="PRK15451.1"/>
    <property type="match status" value="1"/>
</dbReference>
<dbReference type="PANTHER" id="PTHR43861:SF2">
    <property type="entry name" value="CARBOXY-S-ADENOSYL-L-METHIONINE SYNTHASE"/>
    <property type="match status" value="1"/>
</dbReference>
<dbReference type="PANTHER" id="PTHR43861">
    <property type="entry name" value="TRANS-ACONITATE 2-METHYLTRANSFERASE-RELATED"/>
    <property type="match status" value="1"/>
</dbReference>
<dbReference type="Pfam" id="PF13649">
    <property type="entry name" value="Methyltransf_25"/>
    <property type="match status" value="1"/>
</dbReference>
<dbReference type="PIRSF" id="PIRSF006325">
    <property type="entry name" value="MeTrfase_bac"/>
    <property type="match status" value="1"/>
</dbReference>
<dbReference type="SUPFAM" id="SSF53335">
    <property type="entry name" value="S-adenosyl-L-methionine-dependent methyltransferases"/>
    <property type="match status" value="1"/>
</dbReference>
<gene>
    <name evidence="1" type="primary">cmoA</name>
    <name type="ordered locus">EcE24377A_2101</name>
</gene>
<comment type="function">
    <text evidence="1">Catalyzes the conversion of S-adenosyl-L-methionine (SAM) to carboxy-S-adenosyl-L-methionine (Cx-SAM).</text>
</comment>
<comment type="catalytic activity">
    <reaction evidence="1">
        <text>prephenate + S-adenosyl-L-methionine = carboxy-S-adenosyl-L-methionine + 3-phenylpyruvate + H2O</text>
        <dbReference type="Rhea" id="RHEA:51692"/>
        <dbReference type="ChEBI" id="CHEBI:15377"/>
        <dbReference type="ChEBI" id="CHEBI:18005"/>
        <dbReference type="ChEBI" id="CHEBI:29934"/>
        <dbReference type="ChEBI" id="CHEBI:59789"/>
        <dbReference type="ChEBI" id="CHEBI:134278"/>
    </reaction>
</comment>
<comment type="subunit">
    <text evidence="1">Homodimer.</text>
</comment>
<comment type="similarity">
    <text evidence="1">Belongs to the class I-like SAM-binding methyltransferase superfamily. Cx-SAM synthase family.</text>
</comment>
<sequence length="247" mass="27791">MSHRDTLFSAPIARLGDWTFDERVAEVFPDMIQRSVPGYSNIISMIGMLAERFVQPGTQVYDLGCSLGAATLSVRRNIHHDNCKIIAIDNSPAMIERCRRHIDAYKAPTPVDVIEGDIRDIAIENASMVVLNFTLQFLEPSERQALLDKIYQGLNPGGALVLSEKFSFEDAKVGELLFNMHHDFKRANGYSELEISQKRSMLENVMLTDSVETHKARLHKAGFEHSELWFQCFNFGSLVALKAEDAA</sequence>
<organism>
    <name type="scientific">Escherichia coli O139:H28 (strain E24377A / ETEC)</name>
    <dbReference type="NCBI Taxonomy" id="331111"/>
    <lineage>
        <taxon>Bacteria</taxon>
        <taxon>Pseudomonadati</taxon>
        <taxon>Pseudomonadota</taxon>
        <taxon>Gammaproteobacteria</taxon>
        <taxon>Enterobacterales</taxon>
        <taxon>Enterobacteriaceae</taxon>
        <taxon>Escherichia</taxon>
    </lineage>
</organism>
<keyword id="KW-1185">Reference proteome</keyword>
<keyword id="KW-0949">S-adenosyl-L-methionine</keyword>
<keyword id="KW-0808">Transferase</keyword>
<proteinExistence type="inferred from homology"/>
<protein>
    <recommendedName>
        <fullName evidence="1">Carboxy-S-adenosyl-L-methionine synthase</fullName>
        <shortName evidence="1">Cx-SAM synthase</shortName>
        <ecNumber evidence="1">2.1.3.-</ecNumber>
    </recommendedName>
</protein>
<reference key="1">
    <citation type="journal article" date="2008" name="J. Bacteriol.">
        <title>The pangenome structure of Escherichia coli: comparative genomic analysis of E. coli commensal and pathogenic isolates.</title>
        <authorList>
            <person name="Rasko D.A."/>
            <person name="Rosovitz M.J."/>
            <person name="Myers G.S.A."/>
            <person name="Mongodin E.F."/>
            <person name="Fricke W.F."/>
            <person name="Gajer P."/>
            <person name="Crabtree J."/>
            <person name="Sebaihia M."/>
            <person name="Thomson N.R."/>
            <person name="Chaudhuri R."/>
            <person name="Henderson I.R."/>
            <person name="Sperandio V."/>
            <person name="Ravel J."/>
        </authorList>
    </citation>
    <scope>NUCLEOTIDE SEQUENCE [LARGE SCALE GENOMIC DNA]</scope>
    <source>
        <strain>E24377A / ETEC</strain>
    </source>
</reference>
<name>CMOA_ECO24</name>
<accession>A7ZMZ5</accession>